<evidence type="ECO:0000255" key="1">
    <source>
        <dbReference type="HAMAP-Rule" id="MF_01554"/>
    </source>
</evidence>
<protein>
    <recommendedName>
        <fullName evidence="1">Phosphoglucosamine mutase</fullName>
        <ecNumber evidence="1">5.4.2.10</ecNumber>
    </recommendedName>
</protein>
<comment type="function">
    <text evidence="1">Catalyzes the conversion of glucosamine-6-phosphate to glucosamine-1-phosphate.</text>
</comment>
<comment type="catalytic activity">
    <reaction evidence="1">
        <text>alpha-D-glucosamine 1-phosphate = D-glucosamine 6-phosphate</text>
        <dbReference type="Rhea" id="RHEA:23424"/>
        <dbReference type="ChEBI" id="CHEBI:58516"/>
        <dbReference type="ChEBI" id="CHEBI:58725"/>
        <dbReference type="EC" id="5.4.2.10"/>
    </reaction>
</comment>
<comment type="cofactor">
    <cofactor evidence="1">
        <name>Mg(2+)</name>
        <dbReference type="ChEBI" id="CHEBI:18420"/>
    </cofactor>
    <text evidence="1">Binds 1 Mg(2+) ion per subunit.</text>
</comment>
<comment type="PTM">
    <text evidence="1">Activated by phosphorylation.</text>
</comment>
<comment type="similarity">
    <text evidence="1">Belongs to the phosphohexose mutase family.</text>
</comment>
<reference key="1">
    <citation type="submission" date="2006-12" db="EMBL/GenBank/DDBJ databases">
        <title>Complete sequence of Acidovorax avenae subsp. citrulli AAC00-1.</title>
        <authorList>
            <person name="Copeland A."/>
            <person name="Lucas S."/>
            <person name="Lapidus A."/>
            <person name="Barry K."/>
            <person name="Detter J.C."/>
            <person name="Glavina del Rio T."/>
            <person name="Dalin E."/>
            <person name="Tice H."/>
            <person name="Pitluck S."/>
            <person name="Kiss H."/>
            <person name="Brettin T."/>
            <person name="Bruce D."/>
            <person name="Han C."/>
            <person name="Tapia R."/>
            <person name="Gilna P."/>
            <person name="Schmutz J."/>
            <person name="Larimer F."/>
            <person name="Land M."/>
            <person name="Hauser L."/>
            <person name="Kyrpides N."/>
            <person name="Kim E."/>
            <person name="Stahl D."/>
            <person name="Richardson P."/>
        </authorList>
    </citation>
    <scope>NUCLEOTIDE SEQUENCE [LARGE SCALE GENOMIC DNA]</scope>
    <source>
        <strain>AAC00-1</strain>
    </source>
</reference>
<sequence>MARKYFGTDGIRGTVGQAPITPDFVLRLAHAVGRVLRRTEERPTVLIGKDTRISGYMLESALESGFNSAGVDVVLLGPLPTPGVAYLTRAQRASLGVVISASHNAYPDNGIKFFSAQGTKLPDEWELAVEAALDEAPAWADSASLGKARRLEDAAGRYIEFCKSTFSQDLTLKGTKIVVDAAHGAAYHIAPKVFHELGAEVLAIGCSPDGLNINHQVGATHPDALVRAVRANRADYGVALDGDADRLQMVDAAGRLYNGDELLYLLAADRLSRGENVPGVVGTLMTNMAVELALKADGVELVRAKVGDRYVLEELARRRWLLGGESSGHLLALDRHTTGDGLISALQVLQACVRGGRSLARTLEHVRLFPQVLVNVRLLPGQDWKANTVLQDALKSVEAELGTQGRVLVRASGTEPLLRVMVETSDADRASHFAHQLADAARAG</sequence>
<dbReference type="EC" id="5.4.2.10" evidence="1"/>
<dbReference type="EMBL" id="CP000512">
    <property type="protein sequence ID" value="ABM33191.1"/>
    <property type="molecule type" value="Genomic_DNA"/>
</dbReference>
<dbReference type="RefSeq" id="WP_011795715.1">
    <property type="nucleotide sequence ID" value="NC_008752.1"/>
</dbReference>
<dbReference type="SMR" id="A1TQF3"/>
<dbReference type="STRING" id="397945.Aave_2619"/>
<dbReference type="GeneID" id="79792205"/>
<dbReference type="KEGG" id="aav:Aave_2619"/>
<dbReference type="eggNOG" id="COG1109">
    <property type="taxonomic scope" value="Bacteria"/>
</dbReference>
<dbReference type="HOGENOM" id="CLU_016950_7_0_4"/>
<dbReference type="OrthoDB" id="9803322at2"/>
<dbReference type="Proteomes" id="UP000002596">
    <property type="component" value="Chromosome"/>
</dbReference>
<dbReference type="GO" id="GO:0005829">
    <property type="term" value="C:cytosol"/>
    <property type="evidence" value="ECO:0007669"/>
    <property type="project" value="TreeGrafter"/>
</dbReference>
<dbReference type="GO" id="GO:0000287">
    <property type="term" value="F:magnesium ion binding"/>
    <property type="evidence" value="ECO:0007669"/>
    <property type="project" value="UniProtKB-UniRule"/>
</dbReference>
<dbReference type="GO" id="GO:0008966">
    <property type="term" value="F:phosphoglucosamine mutase activity"/>
    <property type="evidence" value="ECO:0007669"/>
    <property type="project" value="UniProtKB-UniRule"/>
</dbReference>
<dbReference type="GO" id="GO:0004615">
    <property type="term" value="F:phosphomannomutase activity"/>
    <property type="evidence" value="ECO:0007669"/>
    <property type="project" value="TreeGrafter"/>
</dbReference>
<dbReference type="GO" id="GO:0005975">
    <property type="term" value="P:carbohydrate metabolic process"/>
    <property type="evidence" value="ECO:0007669"/>
    <property type="project" value="InterPro"/>
</dbReference>
<dbReference type="GO" id="GO:0009252">
    <property type="term" value="P:peptidoglycan biosynthetic process"/>
    <property type="evidence" value="ECO:0007669"/>
    <property type="project" value="TreeGrafter"/>
</dbReference>
<dbReference type="GO" id="GO:0006048">
    <property type="term" value="P:UDP-N-acetylglucosamine biosynthetic process"/>
    <property type="evidence" value="ECO:0007669"/>
    <property type="project" value="TreeGrafter"/>
</dbReference>
<dbReference type="CDD" id="cd05802">
    <property type="entry name" value="GlmM"/>
    <property type="match status" value="1"/>
</dbReference>
<dbReference type="FunFam" id="3.30.310.50:FF:000001">
    <property type="entry name" value="Phosphoglucosamine mutase"/>
    <property type="match status" value="1"/>
</dbReference>
<dbReference type="FunFam" id="3.40.120.10:FF:000001">
    <property type="entry name" value="Phosphoglucosamine mutase"/>
    <property type="match status" value="1"/>
</dbReference>
<dbReference type="FunFam" id="3.40.120.10:FF:000003">
    <property type="entry name" value="Phosphoglucosamine mutase"/>
    <property type="match status" value="1"/>
</dbReference>
<dbReference type="Gene3D" id="3.40.120.10">
    <property type="entry name" value="Alpha-D-Glucose-1,6-Bisphosphate, subunit A, domain 3"/>
    <property type="match status" value="3"/>
</dbReference>
<dbReference type="Gene3D" id="3.30.310.50">
    <property type="entry name" value="Alpha-D-phosphohexomutase, C-terminal domain"/>
    <property type="match status" value="1"/>
</dbReference>
<dbReference type="HAMAP" id="MF_01554_B">
    <property type="entry name" value="GlmM_B"/>
    <property type="match status" value="1"/>
</dbReference>
<dbReference type="InterPro" id="IPR005844">
    <property type="entry name" value="A-D-PHexomutase_a/b/a-I"/>
</dbReference>
<dbReference type="InterPro" id="IPR016055">
    <property type="entry name" value="A-D-PHexomutase_a/b/a-I/II/III"/>
</dbReference>
<dbReference type="InterPro" id="IPR005845">
    <property type="entry name" value="A-D-PHexomutase_a/b/a-II"/>
</dbReference>
<dbReference type="InterPro" id="IPR005846">
    <property type="entry name" value="A-D-PHexomutase_a/b/a-III"/>
</dbReference>
<dbReference type="InterPro" id="IPR005843">
    <property type="entry name" value="A-D-PHexomutase_C"/>
</dbReference>
<dbReference type="InterPro" id="IPR036900">
    <property type="entry name" value="A-D-PHexomutase_C_sf"/>
</dbReference>
<dbReference type="InterPro" id="IPR005841">
    <property type="entry name" value="Alpha-D-phosphohexomutase_SF"/>
</dbReference>
<dbReference type="InterPro" id="IPR006352">
    <property type="entry name" value="GlmM_bact"/>
</dbReference>
<dbReference type="InterPro" id="IPR050060">
    <property type="entry name" value="Phosphoglucosamine_mutase"/>
</dbReference>
<dbReference type="NCBIfam" id="TIGR01455">
    <property type="entry name" value="glmM"/>
    <property type="match status" value="1"/>
</dbReference>
<dbReference type="NCBIfam" id="NF008139">
    <property type="entry name" value="PRK10887.1"/>
    <property type="match status" value="1"/>
</dbReference>
<dbReference type="PANTHER" id="PTHR42946:SF1">
    <property type="entry name" value="PHOSPHOGLUCOMUTASE (ALPHA-D-GLUCOSE-1,6-BISPHOSPHATE-DEPENDENT)"/>
    <property type="match status" value="1"/>
</dbReference>
<dbReference type="PANTHER" id="PTHR42946">
    <property type="entry name" value="PHOSPHOHEXOSE MUTASE"/>
    <property type="match status" value="1"/>
</dbReference>
<dbReference type="Pfam" id="PF02878">
    <property type="entry name" value="PGM_PMM_I"/>
    <property type="match status" value="1"/>
</dbReference>
<dbReference type="Pfam" id="PF02879">
    <property type="entry name" value="PGM_PMM_II"/>
    <property type="match status" value="1"/>
</dbReference>
<dbReference type="Pfam" id="PF02880">
    <property type="entry name" value="PGM_PMM_III"/>
    <property type="match status" value="1"/>
</dbReference>
<dbReference type="Pfam" id="PF00408">
    <property type="entry name" value="PGM_PMM_IV"/>
    <property type="match status" value="1"/>
</dbReference>
<dbReference type="PRINTS" id="PR00509">
    <property type="entry name" value="PGMPMM"/>
</dbReference>
<dbReference type="SUPFAM" id="SSF55957">
    <property type="entry name" value="Phosphoglucomutase, C-terminal domain"/>
    <property type="match status" value="1"/>
</dbReference>
<dbReference type="SUPFAM" id="SSF53738">
    <property type="entry name" value="Phosphoglucomutase, first 3 domains"/>
    <property type="match status" value="3"/>
</dbReference>
<name>GLMM_PARC0</name>
<organism>
    <name type="scientific">Paracidovorax citrulli (strain AAC00-1)</name>
    <name type="common">Acidovorax citrulli</name>
    <dbReference type="NCBI Taxonomy" id="397945"/>
    <lineage>
        <taxon>Bacteria</taxon>
        <taxon>Pseudomonadati</taxon>
        <taxon>Pseudomonadota</taxon>
        <taxon>Betaproteobacteria</taxon>
        <taxon>Burkholderiales</taxon>
        <taxon>Comamonadaceae</taxon>
        <taxon>Paracidovorax</taxon>
    </lineage>
</organism>
<accession>A1TQF3</accession>
<proteinExistence type="inferred from homology"/>
<gene>
    <name evidence="1" type="primary">glmM</name>
    <name type="ordered locus">Aave_2619</name>
</gene>
<keyword id="KW-0413">Isomerase</keyword>
<keyword id="KW-0460">Magnesium</keyword>
<keyword id="KW-0479">Metal-binding</keyword>
<keyword id="KW-0597">Phosphoprotein</keyword>
<feature type="chain" id="PRO_0000301269" description="Phosphoglucosamine mutase">
    <location>
        <begin position="1"/>
        <end position="444"/>
    </location>
</feature>
<feature type="active site" description="Phosphoserine intermediate" evidence="1">
    <location>
        <position position="102"/>
    </location>
</feature>
<feature type="binding site" description="via phosphate group" evidence="1">
    <location>
        <position position="102"/>
    </location>
    <ligand>
        <name>Mg(2+)</name>
        <dbReference type="ChEBI" id="CHEBI:18420"/>
    </ligand>
</feature>
<feature type="binding site" evidence="1">
    <location>
        <position position="241"/>
    </location>
    <ligand>
        <name>Mg(2+)</name>
        <dbReference type="ChEBI" id="CHEBI:18420"/>
    </ligand>
</feature>
<feature type="binding site" evidence="1">
    <location>
        <position position="243"/>
    </location>
    <ligand>
        <name>Mg(2+)</name>
        <dbReference type="ChEBI" id="CHEBI:18420"/>
    </ligand>
</feature>
<feature type="binding site" evidence="1">
    <location>
        <position position="245"/>
    </location>
    <ligand>
        <name>Mg(2+)</name>
        <dbReference type="ChEBI" id="CHEBI:18420"/>
    </ligand>
</feature>
<feature type="modified residue" description="Phosphoserine" evidence="1">
    <location>
        <position position="102"/>
    </location>
</feature>